<name>RL22_CALMQ</name>
<gene>
    <name evidence="1" type="primary">rpl22</name>
    <name type="ordered locus">Cmaq_1930</name>
</gene>
<sequence>MRYWSIRDEDVIDLVKRRYNVTISADQIAKARGFEFRISWKKAIETARAIRFLTIKQAEDYMEKVKDLKAPIPIKEFTRKQAHHNVPWDGWPVAKWPVKVADSFLQVLRNLESNASYRGLNIDNTVIVHASASRGMRIRNYMPRALGRATPWFQDTVNIELVAVELPAELVPKKFSWARVLKAIK</sequence>
<protein>
    <recommendedName>
        <fullName evidence="1">Large ribosomal subunit protein uL22</fullName>
    </recommendedName>
    <alternativeName>
        <fullName evidence="2">50S ribosomal protein L22</fullName>
    </alternativeName>
</protein>
<reference key="1">
    <citation type="submission" date="2007-10" db="EMBL/GenBank/DDBJ databases">
        <title>Complete sequence of Caldivirga maquilingensis IC-167.</title>
        <authorList>
            <consortium name="US DOE Joint Genome Institute"/>
            <person name="Copeland A."/>
            <person name="Lucas S."/>
            <person name="Lapidus A."/>
            <person name="Barry K."/>
            <person name="Glavina del Rio T."/>
            <person name="Dalin E."/>
            <person name="Tice H."/>
            <person name="Pitluck S."/>
            <person name="Saunders E."/>
            <person name="Brettin T."/>
            <person name="Bruce D."/>
            <person name="Detter J.C."/>
            <person name="Han C."/>
            <person name="Schmutz J."/>
            <person name="Larimer F."/>
            <person name="Land M."/>
            <person name="Hauser L."/>
            <person name="Kyrpides N."/>
            <person name="Ivanova N."/>
            <person name="Biddle J.F."/>
            <person name="Zhang Z."/>
            <person name="Fitz-Gibbon S.T."/>
            <person name="Lowe T.M."/>
            <person name="Saltikov C."/>
            <person name="House C.H."/>
            <person name="Richardson P."/>
        </authorList>
    </citation>
    <scope>NUCLEOTIDE SEQUENCE [LARGE SCALE GENOMIC DNA]</scope>
    <source>
        <strain>ATCC 700844 / DSM 13496 / JCM 10307 / IC-167</strain>
    </source>
</reference>
<accession>A8MBL4</accession>
<keyword id="KW-1185">Reference proteome</keyword>
<keyword id="KW-0687">Ribonucleoprotein</keyword>
<keyword id="KW-0689">Ribosomal protein</keyword>
<keyword id="KW-0694">RNA-binding</keyword>
<keyword id="KW-0699">rRNA-binding</keyword>
<proteinExistence type="inferred from homology"/>
<feature type="chain" id="PRO_0000354538" description="Large ribosomal subunit protein uL22">
    <location>
        <begin position="1"/>
        <end position="185"/>
    </location>
</feature>
<comment type="function">
    <text evidence="1">This protein binds specifically to 23S rRNA. It makes multiple contacts with different domains of the 23S rRNA in the assembled 50S subunit and ribosome.</text>
</comment>
<comment type="function">
    <text evidence="1">The globular domain of the protein is located near the polypeptide exit tunnel on the outside of the subunit, while an extended beta-hairpin is found that lines the wall of the exit tunnel in the center of the 70S ribosome.</text>
</comment>
<comment type="subunit">
    <text evidence="1">Part of the 50S ribosomal subunit.</text>
</comment>
<comment type="similarity">
    <text evidence="1">Belongs to the universal ribosomal protein uL22 family.</text>
</comment>
<evidence type="ECO:0000255" key="1">
    <source>
        <dbReference type="HAMAP-Rule" id="MF_01331"/>
    </source>
</evidence>
<evidence type="ECO:0000305" key="2"/>
<organism>
    <name type="scientific">Caldivirga maquilingensis (strain ATCC 700844 / DSM 13496 / JCM 10307 / IC-167)</name>
    <dbReference type="NCBI Taxonomy" id="397948"/>
    <lineage>
        <taxon>Archaea</taxon>
        <taxon>Thermoproteota</taxon>
        <taxon>Thermoprotei</taxon>
        <taxon>Thermoproteales</taxon>
        <taxon>Thermoproteaceae</taxon>
        <taxon>Caldivirga</taxon>
    </lineage>
</organism>
<dbReference type="EMBL" id="CP000852">
    <property type="protein sequence ID" value="ABW02747.1"/>
    <property type="molecule type" value="Genomic_DNA"/>
</dbReference>
<dbReference type="RefSeq" id="WP_012186966.1">
    <property type="nucleotide sequence ID" value="NC_009954.1"/>
</dbReference>
<dbReference type="SMR" id="A8MBL4"/>
<dbReference type="STRING" id="397948.Cmaq_1930"/>
<dbReference type="GeneID" id="5709557"/>
<dbReference type="KEGG" id="cma:Cmaq_1930"/>
<dbReference type="eggNOG" id="arCOG04098">
    <property type="taxonomic scope" value="Archaea"/>
</dbReference>
<dbReference type="HOGENOM" id="CLU_083987_0_2_2"/>
<dbReference type="OrthoDB" id="314984at2157"/>
<dbReference type="Proteomes" id="UP000001137">
    <property type="component" value="Chromosome"/>
</dbReference>
<dbReference type="GO" id="GO:0022625">
    <property type="term" value="C:cytosolic large ribosomal subunit"/>
    <property type="evidence" value="ECO:0007669"/>
    <property type="project" value="TreeGrafter"/>
</dbReference>
<dbReference type="GO" id="GO:0019843">
    <property type="term" value="F:rRNA binding"/>
    <property type="evidence" value="ECO:0007669"/>
    <property type="project" value="UniProtKB-UniRule"/>
</dbReference>
<dbReference type="GO" id="GO:0003735">
    <property type="term" value="F:structural constituent of ribosome"/>
    <property type="evidence" value="ECO:0007669"/>
    <property type="project" value="InterPro"/>
</dbReference>
<dbReference type="GO" id="GO:0002181">
    <property type="term" value="P:cytoplasmic translation"/>
    <property type="evidence" value="ECO:0007669"/>
    <property type="project" value="TreeGrafter"/>
</dbReference>
<dbReference type="CDD" id="cd00336">
    <property type="entry name" value="Ribosomal_L22"/>
    <property type="match status" value="1"/>
</dbReference>
<dbReference type="Gene3D" id="3.90.470.10">
    <property type="entry name" value="Ribosomal protein L22/L17"/>
    <property type="match status" value="1"/>
</dbReference>
<dbReference type="HAMAP" id="MF_01331_A">
    <property type="entry name" value="Ribosomal_uL22_A"/>
    <property type="match status" value="1"/>
</dbReference>
<dbReference type="InterPro" id="IPR001063">
    <property type="entry name" value="Ribosomal_uL22"/>
</dbReference>
<dbReference type="InterPro" id="IPR005721">
    <property type="entry name" value="Ribosomal_uL22_euk/arc"/>
</dbReference>
<dbReference type="InterPro" id="IPR036394">
    <property type="entry name" value="Ribosomal_uL22_sf"/>
</dbReference>
<dbReference type="NCBIfam" id="NF003260">
    <property type="entry name" value="PRK04223.1"/>
    <property type="match status" value="1"/>
</dbReference>
<dbReference type="NCBIfam" id="TIGR01038">
    <property type="entry name" value="uL22_arch_euk"/>
    <property type="match status" value="1"/>
</dbReference>
<dbReference type="PANTHER" id="PTHR11593">
    <property type="entry name" value="60S RIBOSOMAL PROTEIN L17"/>
    <property type="match status" value="1"/>
</dbReference>
<dbReference type="PANTHER" id="PTHR11593:SF10">
    <property type="entry name" value="60S RIBOSOMAL PROTEIN L17"/>
    <property type="match status" value="1"/>
</dbReference>
<dbReference type="Pfam" id="PF00237">
    <property type="entry name" value="Ribosomal_L22"/>
    <property type="match status" value="1"/>
</dbReference>
<dbReference type="SUPFAM" id="SSF54843">
    <property type="entry name" value="Ribosomal protein L22"/>
    <property type="match status" value="1"/>
</dbReference>